<comment type="function">
    <text evidence="1">May be involved in membrane fusion in exocytosis.</text>
</comment>
<comment type="catalytic activity">
    <reaction>
        <text>alpha-D-glucose 1-phosphate = alpha-D-glucose 6-phosphate</text>
        <dbReference type="Rhea" id="RHEA:23536"/>
        <dbReference type="ChEBI" id="CHEBI:58225"/>
        <dbReference type="ChEBI" id="CHEBI:58601"/>
        <dbReference type="EC" id="5.4.2.2"/>
    </reaction>
</comment>
<comment type="cofactor">
    <cofactor evidence="1">
        <name>Mg(2+)</name>
        <dbReference type="ChEBI" id="CHEBI:18420"/>
    </cofactor>
    <text evidence="1">Binds 1 Mg(2+) ion per subunit.</text>
</comment>
<comment type="subcellular location">
    <subcellularLocation>
        <location evidence="1">Cytoplasm</location>
    </subcellularLocation>
</comment>
<comment type="PTM">
    <text evidence="1">Phosphorylated via a calcium-dependent protein kinase.</text>
</comment>
<comment type="similarity">
    <text evidence="3">Belongs to the phosphohexose mutase family.</text>
</comment>
<reference key="1">
    <citation type="journal article" date="1997" name="Biochem. J.">
        <title>Identification of isoforms of the exocytosis-sensitive phosphoprotein PP63/parafusin in Paramecium tetraurelia and demonstration of phosphoglucomutase activity.</title>
        <authorList>
            <person name="Hauser K."/>
            <person name="Kissmehl R."/>
            <person name="Linder J."/>
            <person name="Schultz J.E."/>
            <person name="Lottspeich F."/>
            <person name="Plattner H."/>
        </authorList>
    </citation>
    <scope>NUCLEOTIDE SEQUENCE [MRNA]</scope>
    <source>
        <strain>Stock 51</strain>
    </source>
</reference>
<reference key="2">
    <citation type="journal article" date="2006" name="Nature">
        <title>Global trends of whole-genome duplications revealed by the ciliate Paramecium tetraurelia.</title>
        <authorList>
            <person name="Aury J.-M."/>
            <person name="Jaillon O."/>
            <person name="Duret L."/>
            <person name="Noel B."/>
            <person name="Jubin C."/>
            <person name="Porcel B.M."/>
            <person name="Segurens B."/>
            <person name="Daubin V."/>
            <person name="Anthouard V."/>
            <person name="Aiach N."/>
            <person name="Arnaiz O."/>
            <person name="Billaut A."/>
            <person name="Beisson J."/>
            <person name="Blanc I."/>
            <person name="Bouhouche K."/>
            <person name="Camara F."/>
            <person name="Duharcourt S."/>
            <person name="Guigo R."/>
            <person name="Gogendeau D."/>
            <person name="Katinka M."/>
            <person name="Keller A.-M."/>
            <person name="Kissmehl R."/>
            <person name="Klotz C."/>
            <person name="Koll F."/>
            <person name="Le Mouel A."/>
            <person name="Lepere G."/>
            <person name="Malinsky S."/>
            <person name="Nowacki M."/>
            <person name="Nowak J.K."/>
            <person name="Plattner H."/>
            <person name="Poulain J."/>
            <person name="Ruiz F."/>
            <person name="Serrano V."/>
            <person name="Zagulski M."/>
            <person name="Dessen P."/>
            <person name="Betermier M."/>
            <person name="Weissenbach J."/>
            <person name="Scarpelli C."/>
            <person name="Schaechter V."/>
            <person name="Sperling L."/>
            <person name="Meyer E."/>
            <person name="Cohen J."/>
            <person name="Wincker P."/>
        </authorList>
    </citation>
    <scope>NUCLEOTIDE SEQUENCE [LARGE SCALE GENOMIC DNA]</scope>
    <source>
        <strain>Stock d4-2</strain>
    </source>
</reference>
<evidence type="ECO:0000250" key="1"/>
<evidence type="ECO:0000250" key="2">
    <source>
        <dbReference type="UniProtKB" id="P00949"/>
    </source>
</evidence>
<evidence type="ECO:0000305" key="3"/>
<dbReference type="EC" id="5.4.2.2"/>
<dbReference type="EMBL" id="Y09970">
    <property type="protein sequence ID" value="CAA71089.1"/>
    <property type="molecule type" value="mRNA"/>
</dbReference>
<dbReference type="EMBL" id="CT868096">
    <property type="protein sequence ID" value="CAK70916.1"/>
    <property type="molecule type" value="Genomic_DNA"/>
</dbReference>
<dbReference type="RefSeq" id="XP_001438313.1">
    <property type="nucleotide sequence ID" value="XM_001438276.1"/>
</dbReference>
<dbReference type="SMR" id="O02606"/>
<dbReference type="FunCoup" id="O02606">
    <property type="interactions" value="236"/>
</dbReference>
<dbReference type="STRING" id="5888.O02606"/>
<dbReference type="EnsemblProtists" id="CAK70916">
    <property type="protein sequence ID" value="CAK70916"/>
    <property type="gene ID" value="GSPATT00000627001"/>
</dbReference>
<dbReference type="GeneID" id="5024098"/>
<dbReference type="KEGG" id="ptm:GSPATT00000627001"/>
<dbReference type="eggNOG" id="KOG0625">
    <property type="taxonomic scope" value="Eukaryota"/>
</dbReference>
<dbReference type="HOGENOM" id="CLU_009330_0_1_1"/>
<dbReference type="InParanoid" id="O02606"/>
<dbReference type="OMA" id="WRDPLFG"/>
<dbReference type="OrthoDB" id="2291at2759"/>
<dbReference type="Proteomes" id="UP000000600">
    <property type="component" value="Partially assembled WGS sequence"/>
</dbReference>
<dbReference type="GO" id="GO:0005829">
    <property type="term" value="C:cytosol"/>
    <property type="evidence" value="ECO:0000318"/>
    <property type="project" value="GO_Central"/>
</dbReference>
<dbReference type="GO" id="GO:0000287">
    <property type="term" value="F:magnesium ion binding"/>
    <property type="evidence" value="ECO:0007669"/>
    <property type="project" value="InterPro"/>
</dbReference>
<dbReference type="GO" id="GO:0004614">
    <property type="term" value="F:phosphoglucomutase activity"/>
    <property type="evidence" value="ECO:0000318"/>
    <property type="project" value="GO_Central"/>
</dbReference>
<dbReference type="GO" id="GO:0005975">
    <property type="term" value="P:carbohydrate metabolic process"/>
    <property type="evidence" value="ECO:0000318"/>
    <property type="project" value="GO_Central"/>
</dbReference>
<dbReference type="CDD" id="cd03085">
    <property type="entry name" value="PGM1"/>
    <property type="match status" value="1"/>
</dbReference>
<dbReference type="FunFam" id="3.30.310.50:FF:000010">
    <property type="entry name" value="Phosphoglucomutase"/>
    <property type="match status" value="1"/>
</dbReference>
<dbReference type="FunFam" id="3.40.120.10:FF:000004">
    <property type="entry name" value="Phosphoglucomutase 5"/>
    <property type="match status" value="1"/>
</dbReference>
<dbReference type="Gene3D" id="3.40.120.10">
    <property type="entry name" value="Alpha-D-Glucose-1,6-Bisphosphate, subunit A, domain 3"/>
    <property type="match status" value="3"/>
</dbReference>
<dbReference type="Gene3D" id="3.30.310.50">
    <property type="entry name" value="Alpha-D-phosphohexomutase, C-terminal domain"/>
    <property type="match status" value="1"/>
</dbReference>
<dbReference type="InterPro" id="IPR005844">
    <property type="entry name" value="A-D-PHexomutase_a/b/a-I"/>
</dbReference>
<dbReference type="InterPro" id="IPR016055">
    <property type="entry name" value="A-D-PHexomutase_a/b/a-I/II/III"/>
</dbReference>
<dbReference type="InterPro" id="IPR005845">
    <property type="entry name" value="A-D-PHexomutase_a/b/a-II"/>
</dbReference>
<dbReference type="InterPro" id="IPR005846">
    <property type="entry name" value="A-D-PHexomutase_a/b/a-III"/>
</dbReference>
<dbReference type="InterPro" id="IPR036900">
    <property type="entry name" value="A-D-PHexomutase_C_sf"/>
</dbReference>
<dbReference type="InterPro" id="IPR016066">
    <property type="entry name" value="A-D-PHexomutase_CS"/>
</dbReference>
<dbReference type="InterPro" id="IPR005841">
    <property type="entry name" value="Alpha-D-phosphohexomutase_SF"/>
</dbReference>
<dbReference type="InterPro" id="IPR045244">
    <property type="entry name" value="PGM"/>
</dbReference>
<dbReference type="NCBIfam" id="NF005737">
    <property type="entry name" value="PRK07564.1-1"/>
    <property type="match status" value="1"/>
</dbReference>
<dbReference type="PANTHER" id="PTHR22573:SF2">
    <property type="entry name" value="PHOSPHOGLUCOMUTASE"/>
    <property type="match status" value="1"/>
</dbReference>
<dbReference type="PANTHER" id="PTHR22573">
    <property type="entry name" value="PHOSPHOHEXOMUTASE FAMILY MEMBER"/>
    <property type="match status" value="1"/>
</dbReference>
<dbReference type="Pfam" id="PF24947">
    <property type="entry name" value="PGM1_C_vert_fung"/>
    <property type="match status" value="1"/>
</dbReference>
<dbReference type="Pfam" id="PF02878">
    <property type="entry name" value="PGM_PMM_I"/>
    <property type="match status" value="1"/>
</dbReference>
<dbReference type="Pfam" id="PF02879">
    <property type="entry name" value="PGM_PMM_II"/>
    <property type="match status" value="1"/>
</dbReference>
<dbReference type="Pfam" id="PF02880">
    <property type="entry name" value="PGM_PMM_III"/>
    <property type="match status" value="1"/>
</dbReference>
<dbReference type="PRINTS" id="PR00509">
    <property type="entry name" value="PGMPMM"/>
</dbReference>
<dbReference type="SUPFAM" id="SSF55957">
    <property type="entry name" value="Phosphoglucomutase, C-terminal domain"/>
    <property type="match status" value="1"/>
</dbReference>
<dbReference type="SUPFAM" id="SSF53738">
    <property type="entry name" value="Phosphoglucomutase, first 3 domains"/>
    <property type="match status" value="3"/>
</dbReference>
<dbReference type="PROSITE" id="PS00710">
    <property type="entry name" value="PGM_PMM"/>
    <property type="match status" value="1"/>
</dbReference>
<gene>
    <name type="primary">pp63-2</name>
    <name type="ORF">GSPATT00000627001</name>
</gene>
<proteinExistence type="evidence at transcript level"/>
<protein>
    <recommendedName>
        <fullName>Phosphoglucomutase-2</fullName>
        <shortName>PGM 2</shortName>
        <ecNumber>5.4.2.2</ecNumber>
    </recommendedName>
    <alternativeName>
        <fullName>Glucose phosphomutase 2</fullName>
    </alternativeName>
    <alternativeName>
        <fullName>Parafusin-2</fullName>
        <shortName>Pf-2</shortName>
    </alternativeName>
</protein>
<accession>O02606</accession>
<feature type="chain" id="PRO_0000307834" description="Phosphoglucomutase-2">
    <location>
        <begin position="1"/>
        <end position="572"/>
    </location>
</feature>
<feature type="active site" description="Phosphoserine intermediate" evidence="2">
    <location>
        <position position="126"/>
    </location>
</feature>
<feature type="binding site" evidence="2">
    <location>
        <position position="23"/>
    </location>
    <ligand>
        <name>substrate</name>
    </ligand>
</feature>
<feature type="binding site" evidence="2">
    <location>
        <position position="27"/>
    </location>
    <ligand>
        <name>substrate</name>
    </ligand>
</feature>
<feature type="binding site" evidence="2">
    <location>
        <begin position="126"/>
        <end position="127"/>
    </location>
    <ligand>
        <name>substrate</name>
    </ligand>
</feature>
<feature type="binding site" description="via phosphate group" evidence="2">
    <location>
        <position position="126"/>
    </location>
    <ligand>
        <name>Mg(2+)</name>
        <dbReference type="ChEBI" id="CHEBI:18420"/>
    </ligand>
</feature>
<feature type="binding site" evidence="2">
    <location>
        <position position="140"/>
    </location>
    <ligand>
        <name>substrate</name>
    </ligand>
</feature>
<feature type="binding site" evidence="2">
    <location>
        <position position="308"/>
    </location>
    <ligand>
        <name>Mg(2+)</name>
        <dbReference type="ChEBI" id="CHEBI:18420"/>
    </ligand>
</feature>
<feature type="binding site" evidence="2">
    <location>
        <position position="310"/>
    </location>
    <ligand>
        <name>Mg(2+)</name>
        <dbReference type="ChEBI" id="CHEBI:18420"/>
    </ligand>
</feature>
<feature type="binding site" evidence="2">
    <location>
        <begin position="312"/>
        <end position="313"/>
    </location>
    <ligand>
        <name>substrate</name>
    </ligand>
</feature>
<feature type="binding site" evidence="2">
    <location>
        <position position="312"/>
    </location>
    <ligand>
        <name>Mg(2+)</name>
        <dbReference type="ChEBI" id="CHEBI:18420"/>
    </ligand>
</feature>
<feature type="binding site" evidence="2">
    <location>
        <position position="373"/>
    </location>
    <ligand>
        <name>substrate</name>
    </ligand>
</feature>
<feature type="binding site" evidence="2">
    <location>
        <begin position="392"/>
        <end position="394"/>
    </location>
    <ligand>
        <name>substrate</name>
    </ligand>
</feature>
<feature type="binding site" evidence="2">
    <location>
        <position position="405"/>
    </location>
    <ligand>
        <name>substrate</name>
    </ligand>
</feature>
<feature type="binding site" evidence="2">
    <location>
        <position position="527"/>
    </location>
    <ligand>
        <name>substrate</name>
    </ligand>
</feature>
<keyword id="KW-0963">Cytoplasm</keyword>
<keyword id="KW-0413">Isomerase</keyword>
<keyword id="KW-0460">Magnesium</keyword>
<keyword id="KW-0479">Metal-binding</keyword>
<keyword id="KW-0597">Phosphoprotein</keyword>
<keyword id="KW-1185">Reference proteome</keyword>
<sequence length="572" mass="63718">MQQVIPAPRVQVTQPYAGQKPGTSGLRKKVTEATQPHYLENFVQSIFNTLRKDELKPKNVLFVGGDGRYFNRQAIFSIIRLAYANDISEVHVGQAGLMSTPASSHYIRKVNEEVGNCIGGIILTASHNPGGKEHGDFGIKFNVRTGAPAPEDFTDQIYTHTTKIKEYLTVDYEFEKHINLDQIGVYKFEGTRLEKSHFEVKVVDTVQDYTSLMQKLFDFDLLKGLFSNKDFTFSFDGMHGVAGPYAKHIFGTLLGCSKESLLNCDPSEDFGGGHPDPNLTYAHDLVELLDIHKKKDVGAVPQFGAACDGDADRNMILGRQFFVTPSDSLAVIAANANLIFKNGLLGAARSMPTSGALDKVAAKNGIKLFETPTGWKFFGNLMDAGLINLCGEESFGTGSNHIREKDGIWAVLAWLTILAHKNKNTDHFVTVEEIVTQYWQQFGRNYYSRYDYEQVDSAGANKMMEHLKTKFQYFEQLKQGNKADIYDYVDPVDQSVSKNQGVRFVFGDGSRIIFRLSGTGSVGATIRIYFEQFEQQEIQHETATALANIIKLGLEISDIAQFTGRNEPTVIT</sequence>
<organism>
    <name type="scientific">Paramecium tetraurelia</name>
    <dbReference type="NCBI Taxonomy" id="5888"/>
    <lineage>
        <taxon>Eukaryota</taxon>
        <taxon>Sar</taxon>
        <taxon>Alveolata</taxon>
        <taxon>Ciliophora</taxon>
        <taxon>Intramacronucleata</taxon>
        <taxon>Oligohymenophorea</taxon>
        <taxon>Peniculida</taxon>
        <taxon>Parameciidae</taxon>
        <taxon>Paramecium</taxon>
    </lineage>
</organism>
<name>PGM2_PARTE</name>